<protein>
    <recommendedName>
        <fullName evidence="1">Fibrillarin-like rRNA/tRNA 2'-O-methyltransferase</fullName>
        <ecNumber evidence="1">2.1.1.-</ecNumber>
    </recommendedName>
</protein>
<accession>B0R515</accession>
<name>FLPA_HALS3</name>
<feature type="chain" id="PRO_0000389601" description="Fibrillarin-like rRNA/tRNA 2'-O-methyltransferase">
    <location>
        <begin position="1"/>
        <end position="210"/>
    </location>
</feature>
<feature type="binding site" evidence="1">
    <location>
        <begin position="72"/>
        <end position="73"/>
    </location>
    <ligand>
        <name>S-adenosyl-L-methionine</name>
        <dbReference type="ChEBI" id="CHEBI:59789"/>
    </ligand>
</feature>
<feature type="binding site" evidence="1">
    <location>
        <begin position="88"/>
        <end position="89"/>
    </location>
    <ligand>
        <name>S-adenosyl-L-methionine</name>
        <dbReference type="ChEBI" id="CHEBI:59789"/>
    </ligand>
</feature>
<feature type="binding site" evidence="1">
    <location>
        <begin position="113"/>
        <end position="114"/>
    </location>
    <ligand>
        <name>S-adenosyl-L-methionine</name>
        <dbReference type="ChEBI" id="CHEBI:59789"/>
    </ligand>
</feature>
<feature type="binding site" evidence="1">
    <location>
        <begin position="134"/>
        <end position="137"/>
    </location>
    <ligand>
        <name>S-adenosyl-L-methionine</name>
        <dbReference type="ChEBI" id="CHEBI:59789"/>
    </ligand>
</feature>
<keyword id="KW-0489">Methyltransferase</keyword>
<keyword id="KW-0694">RNA-binding</keyword>
<keyword id="KW-0698">rRNA processing</keyword>
<keyword id="KW-0808">Transferase</keyword>
<keyword id="KW-0819">tRNA processing</keyword>
<reference key="1">
    <citation type="journal article" date="2008" name="Genomics">
        <title>Evolution in the laboratory: the genome of Halobacterium salinarum strain R1 compared to that of strain NRC-1.</title>
        <authorList>
            <person name="Pfeiffer F."/>
            <person name="Schuster S.C."/>
            <person name="Broicher A."/>
            <person name="Falb M."/>
            <person name="Palm P."/>
            <person name="Rodewald K."/>
            <person name="Ruepp A."/>
            <person name="Soppa J."/>
            <person name="Tittor J."/>
            <person name="Oesterhelt D."/>
        </authorList>
    </citation>
    <scope>NUCLEOTIDE SEQUENCE [LARGE SCALE GENOMIC DNA]</scope>
    <source>
        <strain>ATCC 29341 / DSM 671 / R1</strain>
    </source>
</reference>
<gene>
    <name evidence="1" type="primary">flpA</name>
    <name type="ordered locus">OE_2689F</name>
</gene>
<evidence type="ECO:0000255" key="1">
    <source>
        <dbReference type="HAMAP-Rule" id="MF_00351"/>
    </source>
</evidence>
<dbReference type="EC" id="2.1.1.-" evidence="1"/>
<dbReference type="EMBL" id="AM774415">
    <property type="protein sequence ID" value="CAP13830.1"/>
    <property type="molecule type" value="Genomic_DNA"/>
</dbReference>
<dbReference type="RefSeq" id="WP_010902848.1">
    <property type="nucleotide sequence ID" value="NC_010364.1"/>
</dbReference>
<dbReference type="SMR" id="B0R515"/>
<dbReference type="EnsemblBacteria" id="CAP13830">
    <property type="protein sequence ID" value="CAP13830"/>
    <property type="gene ID" value="OE_2689F"/>
</dbReference>
<dbReference type="KEGG" id="hsl:OE_2689F"/>
<dbReference type="HOGENOM" id="CLU_059055_2_0_2"/>
<dbReference type="PhylomeDB" id="B0R515"/>
<dbReference type="Proteomes" id="UP000001321">
    <property type="component" value="Chromosome"/>
</dbReference>
<dbReference type="GO" id="GO:1990259">
    <property type="term" value="F:histone H2AQ104 methyltransferase activity"/>
    <property type="evidence" value="ECO:0007669"/>
    <property type="project" value="TreeGrafter"/>
</dbReference>
<dbReference type="GO" id="GO:0003723">
    <property type="term" value="F:RNA binding"/>
    <property type="evidence" value="ECO:0007669"/>
    <property type="project" value="UniProtKB-UniRule"/>
</dbReference>
<dbReference type="GO" id="GO:0008649">
    <property type="term" value="F:rRNA methyltransferase activity"/>
    <property type="evidence" value="ECO:0007669"/>
    <property type="project" value="TreeGrafter"/>
</dbReference>
<dbReference type="GO" id="GO:0000494">
    <property type="term" value="P:box C/D sno(s)RNA 3'-end processing"/>
    <property type="evidence" value="ECO:0007669"/>
    <property type="project" value="TreeGrafter"/>
</dbReference>
<dbReference type="GO" id="GO:0008033">
    <property type="term" value="P:tRNA processing"/>
    <property type="evidence" value="ECO:0007669"/>
    <property type="project" value="UniProtKB-UniRule"/>
</dbReference>
<dbReference type="Gene3D" id="3.40.50.150">
    <property type="entry name" value="Vaccinia Virus protein VP39"/>
    <property type="match status" value="1"/>
</dbReference>
<dbReference type="HAMAP" id="MF_00351">
    <property type="entry name" value="RNA_methyltransf_FlpA"/>
    <property type="match status" value="1"/>
</dbReference>
<dbReference type="InterPro" id="IPR000692">
    <property type="entry name" value="Fibrillarin"/>
</dbReference>
<dbReference type="InterPro" id="IPR020813">
    <property type="entry name" value="Fibrillarin_CS"/>
</dbReference>
<dbReference type="InterPro" id="IPR029063">
    <property type="entry name" value="SAM-dependent_MTases_sf"/>
</dbReference>
<dbReference type="NCBIfam" id="NF003276">
    <property type="entry name" value="PRK04266.1-2"/>
    <property type="match status" value="1"/>
</dbReference>
<dbReference type="NCBIfam" id="NF003278">
    <property type="entry name" value="PRK04266.1-4"/>
    <property type="match status" value="1"/>
</dbReference>
<dbReference type="PANTHER" id="PTHR10335:SF17">
    <property type="entry name" value="FIBRILLARIN"/>
    <property type="match status" value="1"/>
</dbReference>
<dbReference type="PANTHER" id="PTHR10335">
    <property type="entry name" value="RRNA 2-O-METHYLTRANSFERASE FIBRILLARIN"/>
    <property type="match status" value="1"/>
</dbReference>
<dbReference type="Pfam" id="PF01269">
    <property type="entry name" value="Fibrillarin"/>
    <property type="match status" value="1"/>
</dbReference>
<dbReference type="PIRSF" id="PIRSF006540">
    <property type="entry name" value="Nop17p"/>
    <property type="match status" value="1"/>
</dbReference>
<dbReference type="PRINTS" id="PR00052">
    <property type="entry name" value="FIBRILLARIN"/>
</dbReference>
<dbReference type="SMART" id="SM01206">
    <property type="entry name" value="Fibrillarin"/>
    <property type="match status" value="1"/>
</dbReference>
<dbReference type="SUPFAM" id="SSF53335">
    <property type="entry name" value="S-adenosyl-L-methionine-dependent methyltransferases"/>
    <property type="match status" value="1"/>
</dbReference>
<dbReference type="PROSITE" id="PS00566">
    <property type="entry name" value="FIBRILLARIN"/>
    <property type="match status" value="1"/>
</dbReference>
<comment type="function">
    <text evidence="1">Involved in pre-rRNA and tRNA processing. Utilizes the methyl donor S-adenosyl-L-methionine to catalyze the site-specific 2'-hydroxyl methylation of ribose moieties in rRNA and tRNA. Site specificity is provided by a guide RNA that base pairs with the substrate. Methylation occurs at a characteristic distance from the sequence involved in base pairing with the guide RNA.</text>
</comment>
<comment type="subunit">
    <text evidence="1">Interacts with nop5. Component of box C/D small ribonucleoprotein (sRNP) particles that contain rpl7ae, FlpA and nop5, plus a guide RNA.</text>
</comment>
<comment type="similarity">
    <text evidence="1">Belongs to the methyltransferase superfamily. Fibrillarin family.</text>
</comment>
<organism>
    <name type="scientific">Halobacterium salinarum (strain ATCC 29341 / DSM 671 / R1)</name>
    <dbReference type="NCBI Taxonomy" id="478009"/>
    <lineage>
        <taxon>Archaea</taxon>
        <taxon>Methanobacteriati</taxon>
        <taxon>Methanobacteriota</taxon>
        <taxon>Stenosarchaea group</taxon>
        <taxon>Halobacteria</taxon>
        <taxon>Halobacteriales</taxon>
        <taxon>Halobacteriaceae</taxon>
        <taxon>Halobacterium</taxon>
        <taxon>Halobacterium salinarum NRC-34001</taxon>
    </lineage>
</organism>
<proteinExistence type="inferred from homology"/>
<sequence>MSLPAGVQRRSFGDEDGVLATRGEPAYGEPVVDGWRRWDAHRSKLGATFELGLDTGLSGGDAVLYLGAANGTTVSHVADFAGPTYAVEFAPRPVTDLLAVADSRERLFPLLKDARAPETYAHVVESGVDAIVQDVATRGQADVALSNRQFLADDGRLVAALKARSEDVTADPAAVFEDLLGRLRDGYEVRATARMEPFHEDHLAVVATPR</sequence>